<comment type="function">
    <text evidence="1">Structural component of the T=16 icosahedral capsid. The capsid is composed of pentamers and hexamers of major capsid protein/MCP, which are linked together by heterotrimers called triplexes. These triplexes are formed by a single molecule of triplex protein 1/TRX1 and two copies of triplex protein 2/TRX2. Additionally, TRX1 is required for efficient transport of TRX2 to the nucleus, which is the site of capsid assembly.</text>
</comment>
<comment type="subunit">
    <text evidence="1">Interacts with TRX2, MCP and capsid vertex component 2/CVC2.</text>
</comment>
<comment type="subcellular location">
    <subcellularLocation>
        <location evidence="1">Virion</location>
    </subcellularLocation>
    <subcellularLocation>
        <location evidence="1">Host nucleus</location>
    </subcellularLocation>
</comment>
<comment type="similarity">
    <text evidence="1">Belongs to the herpesviridae TRX1 protein family.</text>
</comment>
<organism>
    <name type="scientific">Psittacid herpesvirus 1 (isolate Amazon parrot/-/97-0001/1997)</name>
    <name type="common">PsHV-1</name>
    <name type="synonym">Pacheco's disease virus</name>
    <dbReference type="NCBI Taxonomy" id="670426"/>
    <lineage>
        <taxon>Viruses</taxon>
        <taxon>Duplodnaviria</taxon>
        <taxon>Heunggongvirae</taxon>
        <taxon>Peploviricota</taxon>
        <taxon>Herviviricetes</taxon>
        <taxon>Herpesvirales</taxon>
        <taxon>Orthoherpesviridae</taxon>
        <taxon>Alphaherpesvirinae</taxon>
        <taxon>Iltovirus</taxon>
        <taxon>Iltovirus psittacidalpha1</taxon>
        <taxon>Psittacid alphaherpesvirus 1</taxon>
    </lineage>
</organism>
<sequence>MANMKPNLTDLFRLRERADEGAARRENDRLLGLGSTVPQLLRPVWSGAPTVTGNIIGAIVNRGSAGTELLRTGPATNSGGGRMAAQQHAFGADDAAGVKAALLGSIAPTADALRAQQVLTTQVTVTDMCKPDVEGPGSLMLFFRGVRRLLIKLSAETMVRNDLINELETAFMILNRICGLPPVGTNGINNFEASLVSLNVLAAAAAPHYRNTCEVDALRTFVLAGGKDSKLNEKLTNLDLILQASVESRNFPHSILFPAGALTESVNSTNVACVKMLMNGSVELEGGLTRPCGSFRFPACLFLDLDDTRQCGVVPRGADRADGLFYVYLLFLYSTETWHPSYEIYVAKSALGEAGLQSMLDEKFARRRVNNTVAAAPPAGNFYARGRQREDGDWRCYIEDAYRRASGNNAVNPLEQGARPTDLHISFAGVPDRNSATYAAFCQLGVSLGPWSSACRYTTVQRHGLGLKYVELPGLSLKIGTWRACY</sequence>
<gene>
    <name evidence="1" type="primary">TRX1</name>
    <name type="ordered locus">UL38</name>
</gene>
<dbReference type="EMBL" id="AY372243">
    <property type="protein sequence ID" value="AAQ73717.1"/>
    <property type="molecule type" value="Genomic_DNA"/>
</dbReference>
<dbReference type="RefSeq" id="NP_944411.1">
    <property type="nucleotide sequence ID" value="NC_005264.1"/>
</dbReference>
<dbReference type="SMR" id="Q6UDJ3"/>
<dbReference type="GeneID" id="2657017"/>
<dbReference type="KEGG" id="vg:2657017"/>
<dbReference type="Proteomes" id="UP000006840">
    <property type="component" value="Segment"/>
</dbReference>
<dbReference type="GO" id="GO:0042025">
    <property type="term" value="C:host cell nucleus"/>
    <property type="evidence" value="ECO:0007669"/>
    <property type="project" value="UniProtKB-SubCell"/>
</dbReference>
<dbReference type="GO" id="GO:0019028">
    <property type="term" value="C:viral capsid"/>
    <property type="evidence" value="ECO:0007669"/>
    <property type="project" value="UniProtKB-KW"/>
</dbReference>
<dbReference type="GO" id="GO:0003677">
    <property type="term" value="F:DNA binding"/>
    <property type="evidence" value="ECO:0007669"/>
    <property type="project" value="InterPro"/>
</dbReference>
<dbReference type="GO" id="GO:0019069">
    <property type="term" value="P:viral capsid assembly"/>
    <property type="evidence" value="ECO:0007669"/>
    <property type="project" value="InterPro"/>
</dbReference>
<dbReference type="HAMAP" id="MF_04018">
    <property type="entry name" value="HSV_TRX1"/>
    <property type="match status" value="1"/>
</dbReference>
<dbReference type="InterPro" id="IPR004999">
    <property type="entry name" value="Herpes_1"/>
</dbReference>
<dbReference type="Pfam" id="PF03327">
    <property type="entry name" value="Herpes_VP19C"/>
    <property type="match status" value="1"/>
</dbReference>
<evidence type="ECO:0000255" key="1">
    <source>
        <dbReference type="HAMAP-Rule" id="MF_04018"/>
    </source>
</evidence>
<accession>Q6UDJ3</accession>
<organismHost>
    <name type="scientific">Amazona oratrix</name>
    <name type="common">yellow-headed parrot</name>
    <dbReference type="NCBI Taxonomy" id="152276"/>
</organismHost>
<feature type="chain" id="PRO_0000406868" description="Triplex capsid protein 1">
    <location>
        <begin position="1"/>
        <end position="486"/>
    </location>
</feature>
<keyword id="KW-0167">Capsid protein</keyword>
<keyword id="KW-1048">Host nucleus</keyword>
<keyword id="KW-1185">Reference proteome</keyword>
<keyword id="KW-0946">Virion</keyword>
<protein>
    <recommendedName>
        <fullName evidence="1">Triplex capsid protein 1</fullName>
    </recommendedName>
</protein>
<reference key="1">
    <citation type="journal article" date="2006" name="J. Virol.">
        <title>Psittacid herpesvirus 1 and infectious laryngotracheitis virus: Comparative genome sequence analysis of two avian alphaherpesviruses.</title>
        <authorList>
            <person name="Thureen D.R."/>
            <person name="Keeler C.L. Jr."/>
        </authorList>
    </citation>
    <scope>NUCLEOTIDE SEQUENCE [LARGE SCALE GENOMIC DNA]</scope>
</reference>
<name>TRX1_PSHV1</name>
<proteinExistence type="inferred from homology"/>